<gene>
    <name evidence="1" type="primary">katG</name>
    <name type="ordered locus">Arad_9370</name>
</gene>
<accession>B9JKI5</accession>
<sequence>MDTKVDNAGKCPVVHTHTAHGGRSNRDWWPNQLNLRILHQNSSLSNPLGTAFNYAEEFKKLDLEALKKDLFALMTDSQEWWPADFGHYGPLFIRMAWHSAGTYRTGDGRGGAGAGQQRFAPLNSWPDNVNLDKARRLLWPIKQKYGNQISWADLLVLTGNVALESMGFKTFGFAGGRADVWEPAEDVYWGSEDTWLGDKRYSGDRDLEKPLSAVQMGLIYVNPEGPNGNPDPLAAARDIRETFARMAMNDEETVALIAGGHTFGKTHGAGDAAHVGADPEAGDIEEQGFGWKSSYGTGKGGDTISSGLEVIWTTTPTKWSNNFFENLFGFEWELTKSPAGAHQWTPKNGAGAGIVPDAHDPSKRHAPSMLTTDLSLRFDPAYEKISRRFFENPDQFADAFARAWFKLTHRDMGPRVLYLGPEVPSEELIWQDPIPAVDHLLIDAKDIADLKEKILASGLPISQLVSTAWASAATFRGSDKRGGANGARIRLAPQKDWEVNQPTQLATVLATLEGIQKAFNDAQLSGKKVSLADLIVLAGSAAVEKAAKNAGHDIEVPFAPGRTDATQEQTDVESFAVLEPIADGFRNYQKGEYTISPEELLIDKAQLLTLTAPELTVLVGGLRVLNANTGQSQHGVFTKRPETLTNDFFVNLLDMGTAWKVSPDSKYVFEGRDRDTNEIKWTGTRIDLVFGSNSQLRALAEVYGQGDTQEKFVRDFVAAWTKVMNADRFDLA</sequence>
<feature type="signal peptide" evidence="1">
    <location>
        <begin position="1"/>
        <end position="45"/>
    </location>
</feature>
<feature type="chain" id="PRO_1000189069" description="Catalase-peroxidase">
    <location>
        <begin position="46"/>
        <end position="732"/>
    </location>
</feature>
<feature type="active site" description="Proton acceptor" evidence="1">
    <location>
        <position position="98"/>
    </location>
</feature>
<feature type="binding site" description="axial binding residue" evidence="1">
    <location>
        <position position="261"/>
    </location>
    <ligand>
        <name>heme b</name>
        <dbReference type="ChEBI" id="CHEBI:60344"/>
    </ligand>
    <ligandPart>
        <name>Fe</name>
        <dbReference type="ChEBI" id="CHEBI:18248"/>
    </ligandPart>
</feature>
<feature type="site" description="Transition state stabilizer" evidence="1">
    <location>
        <position position="94"/>
    </location>
</feature>
<feature type="cross-link" description="Tryptophyl-tyrosyl-methioninium (Trp-Tyr) (with M-246)" evidence="1">
    <location>
        <begin position="97"/>
        <end position="220"/>
    </location>
</feature>
<feature type="cross-link" description="Tryptophyl-tyrosyl-methioninium (Tyr-Met) (with W-97)" evidence="1">
    <location>
        <begin position="220"/>
        <end position="246"/>
    </location>
</feature>
<dbReference type="EC" id="1.11.1.21" evidence="1"/>
<dbReference type="EMBL" id="CP000629">
    <property type="protein sequence ID" value="ACM30427.1"/>
    <property type="molecule type" value="Genomic_DNA"/>
</dbReference>
<dbReference type="RefSeq" id="WP_015917738.1">
    <property type="nucleotide sequence ID" value="NC_011983.1"/>
</dbReference>
<dbReference type="SMR" id="B9JKI5"/>
<dbReference type="STRING" id="311403.Arad_9370"/>
<dbReference type="GeneID" id="86852124"/>
<dbReference type="KEGG" id="ara:Arad_9370"/>
<dbReference type="eggNOG" id="COG0376">
    <property type="taxonomic scope" value="Bacteria"/>
</dbReference>
<dbReference type="HOGENOM" id="CLU_025424_2_0_5"/>
<dbReference type="Proteomes" id="UP000001600">
    <property type="component" value="Chromosome 2"/>
</dbReference>
<dbReference type="GO" id="GO:0005829">
    <property type="term" value="C:cytosol"/>
    <property type="evidence" value="ECO:0007669"/>
    <property type="project" value="TreeGrafter"/>
</dbReference>
<dbReference type="GO" id="GO:0004096">
    <property type="term" value="F:catalase activity"/>
    <property type="evidence" value="ECO:0007669"/>
    <property type="project" value="UniProtKB-UniRule"/>
</dbReference>
<dbReference type="GO" id="GO:0020037">
    <property type="term" value="F:heme binding"/>
    <property type="evidence" value="ECO:0007669"/>
    <property type="project" value="InterPro"/>
</dbReference>
<dbReference type="GO" id="GO:0046872">
    <property type="term" value="F:metal ion binding"/>
    <property type="evidence" value="ECO:0007669"/>
    <property type="project" value="UniProtKB-KW"/>
</dbReference>
<dbReference type="GO" id="GO:0070301">
    <property type="term" value="P:cellular response to hydrogen peroxide"/>
    <property type="evidence" value="ECO:0007669"/>
    <property type="project" value="TreeGrafter"/>
</dbReference>
<dbReference type="GO" id="GO:0042744">
    <property type="term" value="P:hydrogen peroxide catabolic process"/>
    <property type="evidence" value="ECO:0007669"/>
    <property type="project" value="UniProtKB-KW"/>
</dbReference>
<dbReference type="CDD" id="cd00649">
    <property type="entry name" value="catalase_peroxidase_1"/>
    <property type="match status" value="1"/>
</dbReference>
<dbReference type="CDD" id="cd08200">
    <property type="entry name" value="catalase_peroxidase_2"/>
    <property type="match status" value="1"/>
</dbReference>
<dbReference type="FunFam" id="1.10.420.10:FF:000002">
    <property type="entry name" value="Catalase-peroxidase"/>
    <property type="match status" value="1"/>
</dbReference>
<dbReference type="FunFam" id="1.10.420.10:FF:000004">
    <property type="entry name" value="Catalase-peroxidase"/>
    <property type="match status" value="1"/>
</dbReference>
<dbReference type="FunFam" id="1.10.520.10:FF:000002">
    <property type="entry name" value="Catalase-peroxidase"/>
    <property type="match status" value="1"/>
</dbReference>
<dbReference type="FunFam" id="1.10.520.10:FF:000004">
    <property type="entry name" value="Catalase-peroxidase"/>
    <property type="match status" value="1"/>
</dbReference>
<dbReference type="Gene3D" id="1.10.520.10">
    <property type="match status" value="2"/>
</dbReference>
<dbReference type="Gene3D" id="1.10.420.10">
    <property type="entry name" value="Peroxidase, domain 2"/>
    <property type="match status" value="2"/>
</dbReference>
<dbReference type="HAMAP" id="MF_01961">
    <property type="entry name" value="Catal_peroxid"/>
    <property type="match status" value="1"/>
</dbReference>
<dbReference type="InterPro" id="IPR000763">
    <property type="entry name" value="Catalase_peroxidase"/>
</dbReference>
<dbReference type="InterPro" id="IPR002016">
    <property type="entry name" value="Haem_peroxidase"/>
</dbReference>
<dbReference type="InterPro" id="IPR010255">
    <property type="entry name" value="Haem_peroxidase_sf"/>
</dbReference>
<dbReference type="InterPro" id="IPR019794">
    <property type="entry name" value="Peroxidases_AS"/>
</dbReference>
<dbReference type="InterPro" id="IPR019793">
    <property type="entry name" value="Peroxidases_heam-ligand_BS"/>
</dbReference>
<dbReference type="NCBIfam" id="TIGR00198">
    <property type="entry name" value="cat_per_HPI"/>
    <property type="match status" value="1"/>
</dbReference>
<dbReference type="NCBIfam" id="NF011635">
    <property type="entry name" value="PRK15061.1"/>
    <property type="match status" value="1"/>
</dbReference>
<dbReference type="PANTHER" id="PTHR30555:SF0">
    <property type="entry name" value="CATALASE-PEROXIDASE"/>
    <property type="match status" value="1"/>
</dbReference>
<dbReference type="PANTHER" id="PTHR30555">
    <property type="entry name" value="HYDROPEROXIDASE I, BIFUNCTIONAL CATALASE-PEROXIDASE"/>
    <property type="match status" value="1"/>
</dbReference>
<dbReference type="Pfam" id="PF00141">
    <property type="entry name" value="peroxidase"/>
    <property type="match status" value="2"/>
</dbReference>
<dbReference type="PRINTS" id="PR00460">
    <property type="entry name" value="BPEROXIDASE"/>
</dbReference>
<dbReference type="PRINTS" id="PR00458">
    <property type="entry name" value="PEROXIDASE"/>
</dbReference>
<dbReference type="SUPFAM" id="SSF48113">
    <property type="entry name" value="Heme-dependent peroxidases"/>
    <property type="match status" value="2"/>
</dbReference>
<dbReference type="PROSITE" id="PS00435">
    <property type="entry name" value="PEROXIDASE_1"/>
    <property type="match status" value="1"/>
</dbReference>
<dbReference type="PROSITE" id="PS00436">
    <property type="entry name" value="PEROXIDASE_2"/>
    <property type="match status" value="1"/>
</dbReference>
<dbReference type="PROSITE" id="PS50873">
    <property type="entry name" value="PEROXIDASE_4"/>
    <property type="match status" value="1"/>
</dbReference>
<evidence type="ECO:0000255" key="1">
    <source>
        <dbReference type="HAMAP-Rule" id="MF_01961"/>
    </source>
</evidence>
<name>KATG_RHIR8</name>
<protein>
    <recommendedName>
        <fullName evidence="1">Catalase-peroxidase</fullName>
        <shortName evidence="1">CP</shortName>
        <ecNumber evidence="1">1.11.1.21</ecNumber>
    </recommendedName>
    <alternativeName>
        <fullName evidence="1">Peroxidase/catalase</fullName>
    </alternativeName>
</protein>
<keyword id="KW-0349">Heme</keyword>
<keyword id="KW-0376">Hydrogen peroxide</keyword>
<keyword id="KW-0408">Iron</keyword>
<keyword id="KW-0479">Metal-binding</keyword>
<keyword id="KW-0560">Oxidoreductase</keyword>
<keyword id="KW-0575">Peroxidase</keyword>
<keyword id="KW-0732">Signal</keyword>
<reference key="1">
    <citation type="journal article" date="2009" name="J. Bacteriol.">
        <title>Genome sequences of three Agrobacterium biovars help elucidate the evolution of multichromosome genomes in bacteria.</title>
        <authorList>
            <person name="Slater S.C."/>
            <person name="Goldman B.S."/>
            <person name="Goodner B."/>
            <person name="Setubal J.C."/>
            <person name="Farrand S.K."/>
            <person name="Nester E.W."/>
            <person name="Burr T.J."/>
            <person name="Banta L."/>
            <person name="Dickerman A.W."/>
            <person name="Paulsen I."/>
            <person name="Otten L."/>
            <person name="Suen G."/>
            <person name="Welch R."/>
            <person name="Almeida N.F."/>
            <person name="Arnold F."/>
            <person name="Burton O.T."/>
            <person name="Du Z."/>
            <person name="Ewing A."/>
            <person name="Godsy E."/>
            <person name="Heisel S."/>
            <person name="Houmiel K.L."/>
            <person name="Jhaveri J."/>
            <person name="Lu J."/>
            <person name="Miller N.M."/>
            <person name="Norton S."/>
            <person name="Chen Q."/>
            <person name="Phoolcharoen W."/>
            <person name="Ohlin V."/>
            <person name="Ondrusek D."/>
            <person name="Pride N."/>
            <person name="Stricklin S.L."/>
            <person name="Sun J."/>
            <person name="Wheeler C."/>
            <person name="Wilson L."/>
            <person name="Zhu H."/>
            <person name="Wood D.W."/>
        </authorList>
    </citation>
    <scope>NUCLEOTIDE SEQUENCE [LARGE SCALE GENOMIC DNA]</scope>
    <source>
        <strain>K84 / ATCC BAA-868</strain>
    </source>
</reference>
<organism>
    <name type="scientific">Rhizobium rhizogenes (strain K84 / ATCC BAA-868)</name>
    <name type="common">Agrobacterium radiobacter</name>
    <dbReference type="NCBI Taxonomy" id="311403"/>
    <lineage>
        <taxon>Bacteria</taxon>
        <taxon>Pseudomonadati</taxon>
        <taxon>Pseudomonadota</taxon>
        <taxon>Alphaproteobacteria</taxon>
        <taxon>Hyphomicrobiales</taxon>
        <taxon>Rhizobiaceae</taxon>
        <taxon>Rhizobium/Agrobacterium group</taxon>
        <taxon>Rhizobium</taxon>
    </lineage>
</organism>
<comment type="function">
    <text evidence="1">Bifunctional enzyme with both catalase and broad-spectrum peroxidase activity.</text>
</comment>
<comment type="catalytic activity">
    <reaction evidence="1">
        <text>H2O2 + AH2 = A + 2 H2O</text>
        <dbReference type="Rhea" id="RHEA:30275"/>
        <dbReference type="ChEBI" id="CHEBI:13193"/>
        <dbReference type="ChEBI" id="CHEBI:15377"/>
        <dbReference type="ChEBI" id="CHEBI:16240"/>
        <dbReference type="ChEBI" id="CHEBI:17499"/>
        <dbReference type="EC" id="1.11.1.21"/>
    </reaction>
</comment>
<comment type="catalytic activity">
    <reaction evidence="1">
        <text>2 H2O2 = O2 + 2 H2O</text>
        <dbReference type="Rhea" id="RHEA:20309"/>
        <dbReference type="ChEBI" id="CHEBI:15377"/>
        <dbReference type="ChEBI" id="CHEBI:15379"/>
        <dbReference type="ChEBI" id="CHEBI:16240"/>
        <dbReference type="EC" id="1.11.1.21"/>
    </reaction>
</comment>
<comment type="cofactor">
    <cofactor evidence="1">
        <name>heme b</name>
        <dbReference type="ChEBI" id="CHEBI:60344"/>
    </cofactor>
    <text evidence="1">Binds 1 heme b (iron(II)-protoporphyrin IX) group per dimer.</text>
</comment>
<comment type="subunit">
    <text evidence="1">Homodimer or homotetramer.</text>
</comment>
<comment type="PTM">
    <text evidence="1">Formation of the three residue Trp-Tyr-Met cross-link is important for the catalase, but not the peroxidase activity of the enzyme.</text>
</comment>
<comment type="similarity">
    <text evidence="1">Belongs to the peroxidase family. Peroxidase/catalase subfamily.</text>
</comment>
<proteinExistence type="inferred from homology"/>